<organism>
    <name type="scientific">Corynebacterium glutamicum (strain ATCC 13032 / DSM 20300 / JCM 1318 / BCRC 11384 / CCUG 27702 / LMG 3730 / NBRC 12168 / NCIMB 10025 / NRRL B-2784 / 534)</name>
    <dbReference type="NCBI Taxonomy" id="196627"/>
    <lineage>
        <taxon>Bacteria</taxon>
        <taxon>Bacillati</taxon>
        <taxon>Actinomycetota</taxon>
        <taxon>Actinomycetes</taxon>
        <taxon>Mycobacteriales</taxon>
        <taxon>Corynebacteriaceae</taxon>
        <taxon>Corynebacterium</taxon>
    </lineage>
</organism>
<evidence type="ECO:0000255" key="1">
    <source>
        <dbReference type="HAMAP-Rule" id="MF_00093"/>
    </source>
</evidence>
<name>RF1_CORGL</name>
<dbReference type="EMBL" id="BA000036">
    <property type="protein sequence ID" value="BAB98593.1"/>
    <property type="molecule type" value="Genomic_DNA"/>
</dbReference>
<dbReference type="EMBL" id="BX927151">
    <property type="protein sequence ID" value="CAF19904.1"/>
    <property type="molecule type" value="Genomic_DNA"/>
</dbReference>
<dbReference type="RefSeq" id="NP_600426.1">
    <property type="nucleotide sequence ID" value="NC_003450.3"/>
</dbReference>
<dbReference type="RefSeq" id="WP_003854866.1">
    <property type="nucleotide sequence ID" value="NC_006958.1"/>
</dbReference>
<dbReference type="SMR" id="Q8NR57"/>
<dbReference type="STRING" id="196627.cg1355"/>
<dbReference type="GeneID" id="1019183"/>
<dbReference type="KEGG" id="cgb:cg1355"/>
<dbReference type="KEGG" id="cgl:Cgl1200"/>
<dbReference type="PATRIC" id="fig|196627.13.peg.1180"/>
<dbReference type="eggNOG" id="COG0216">
    <property type="taxonomic scope" value="Bacteria"/>
</dbReference>
<dbReference type="HOGENOM" id="CLU_036856_0_6_11"/>
<dbReference type="OrthoDB" id="9806673at2"/>
<dbReference type="BioCyc" id="CORYNE:G18NG-10773-MONOMER"/>
<dbReference type="Proteomes" id="UP000000582">
    <property type="component" value="Chromosome"/>
</dbReference>
<dbReference type="Proteomes" id="UP000001009">
    <property type="component" value="Chromosome"/>
</dbReference>
<dbReference type="GO" id="GO:0005737">
    <property type="term" value="C:cytoplasm"/>
    <property type="evidence" value="ECO:0007669"/>
    <property type="project" value="UniProtKB-SubCell"/>
</dbReference>
<dbReference type="GO" id="GO:0016149">
    <property type="term" value="F:translation release factor activity, codon specific"/>
    <property type="evidence" value="ECO:0007669"/>
    <property type="project" value="UniProtKB-UniRule"/>
</dbReference>
<dbReference type="FunFam" id="3.30.160.20:FF:000004">
    <property type="entry name" value="Peptide chain release factor 1"/>
    <property type="match status" value="1"/>
</dbReference>
<dbReference type="Gene3D" id="3.30.160.20">
    <property type="match status" value="1"/>
</dbReference>
<dbReference type="Gene3D" id="3.30.70.1660">
    <property type="match status" value="1"/>
</dbReference>
<dbReference type="Gene3D" id="6.10.140.1950">
    <property type="match status" value="1"/>
</dbReference>
<dbReference type="HAMAP" id="MF_00093">
    <property type="entry name" value="Rel_fac_1"/>
    <property type="match status" value="1"/>
</dbReference>
<dbReference type="InterPro" id="IPR005139">
    <property type="entry name" value="PCRF"/>
</dbReference>
<dbReference type="InterPro" id="IPR000352">
    <property type="entry name" value="Pep_chain_release_fac_I"/>
</dbReference>
<dbReference type="InterPro" id="IPR045853">
    <property type="entry name" value="Pep_chain_release_fac_I_sf"/>
</dbReference>
<dbReference type="InterPro" id="IPR050057">
    <property type="entry name" value="Prokaryotic/Mito_RF"/>
</dbReference>
<dbReference type="InterPro" id="IPR004373">
    <property type="entry name" value="RF-1"/>
</dbReference>
<dbReference type="NCBIfam" id="TIGR00019">
    <property type="entry name" value="prfA"/>
    <property type="match status" value="1"/>
</dbReference>
<dbReference type="NCBIfam" id="NF001859">
    <property type="entry name" value="PRK00591.1"/>
    <property type="match status" value="1"/>
</dbReference>
<dbReference type="PANTHER" id="PTHR43804">
    <property type="entry name" value="LD18447P"/>
    <property type="match status" value="1"/>
</dbReference>
<dbReference type="PANTHER" id="PTHR43804:SF7">
    <property type="entry name" value="LD18447P"/>
    <property type="match status" value="1"/>
</dbReference>
<dbReference type="Pfam" id="PF03462">
    <property type="entry name" value="PCRF"/>
    <property type="match status" value="1"/>
</dbReference>
<dbReference type="Pfam" id="PF00472">
    <property type="entry name" value="RF-1"/>
    <property type="match status" value="1"/>
</dbReference>
<dbReference type="SMART" id="SM00937">
    <property type="entry name" value="PCRF"/>
    <property type="match status" value="1"/>
</dbReference>
<dbReference type="SUPFAM" id="SSF75620">
    <property type="entry name" value="Release factor"/>
    <property type="match status" value="1"/>
</dbReference>
<dbReference type="PROSITE" id="PS00745">
    <property type="entry name" value="RF_PROK_I"/>
    <property type="match status" value="1"/>
</dbReference>
<comment type="function">
    <text evidence="1">Peptide chain release factor 1 directs the termination of translation in response to the peptide chain termination codons UAG and UAA.</text>
</comment>
<comment type="subcellular location">
    <subcellularLocation>
        <location evidence="1">Cytoplasm</location>
    </subcellularLocation>
</comment>
<comment type="PTM">
    <text evidence="1">Methylated by PrmC. Methylation increases the termination efficiency of RF1.</text>
</comment>
<comment type="similarity">
    <text evidence="1">Belongs to the prokaryotic/mitochondrial release factor family.</text>
</comment>
<proteinExistence type="inferred from homology"/>
<sequence>MASQVSAVDDILSEYHGLEQQMADPELHNDAAAARRVGKRYSELQPIINVHRDLVSAQEDLEAAREMAHEDHEFQAEAERLEVEVVELEEKLADLLAPRDPHDGEDIVMEIKAGAGGEEAALFAGDLLRMYQKFADKHGFVVEVLDSAESDLGGVKDITLSIRSRQPSRDGAWSQFKFEGGVHRVQRVPVTESQGRIQTSAAGVLVYPEPDEVENVEIDEKDIRVDVYRSSGKGGQGVNTTDSAVRITHLPTGLVVTCQKERSQIQNRARAMQVLAARLQAMKEEEAAAEAATGRAAQIRTMDRSERIRTYNWPENRISDHRIGFKANNLDSVLDGELDDLFTALQAAERAERLEAEG</sequence>
<protein>
    <recommendedName>
        <fullName evidence="1">Peptide chain release factor 1</fullName>
        <shortName evidence="1">RF-1</shortName>
    </recommendedName>
</protein>
<feature type="chain" id="PRO_0000177663" description="Peptide chain release factor 1">
    <location>
        <begin position="1"/>
        <end position="358"/>
    </location>
</feature>
<feature type="modified residue" description="N5-methylglutamine" evidence="1">
    <location>
        <position position="236"/>
    </location>
</feature>
<keyword id="KW-0963">Cytoplasm</keyword>
<keyword id="KW-0488">Methylation</keyword>
<keyword id="KW-0648">Protein biosynthesis</keyword>
<keyword id="KW-1185">Reference proteome</keyword>
<accession>Q8NR57</accession>
<gene>
    <name evidence="1" type="primary">prfA</name>
    <name type="ordered locus">Cgl1200</name>
    <name type="ordered locus">cg1355</name>
</gene>
<reference key="1">
    <citation type="journal article" date="2003" name="Appl. Microbiol. Biotechnol.">
        <title>The Corynebacterium glutamicum genome: features and impacts on biotechnological processes.</title>
        <authorList>
            <person name="Ikeda M."/>
            <person name="Nakagawa S."/>
        </authorList>
    </citation>
    <scope>NUCLEOTIDE SEQUENCE [LARGE SCALE GENOMIC DNA]</scope>
    <source>
        <strain>ATCC 13032 / DSM 20300 / JCM 1318 / BCRC 11384 / CCUG 27702 / LMG 3730 / NBRC 12168 / NCIMB 10025 / NRRL B-2784 / 534</strain>
    </source>
</reference>
<reference key="2">
    <citation type="journal article" date="2003" name="J. Biotechnol.">
        <title>The complete Corynebacterium glutamicum ATCC 13032 genome sequence and its impact on the production of L-aspartate-derived amino acids and vitamins.</title>
        <authorList>
            <person name="Kalinowski J."/>
            <person name="Bathe B."/>
            <person name="Bartels D."/>
            <person name="Bischoff N."/>
            <person name="Bott M."/>
            <person name="Burkovski A."/>
            <person name="Dusch N."/>
            <person name="Eggeling L."/>
            <person name="Eikmanns B.J."/>
            <person name="Gaigalat L."/>
            <person name="Goesmann A."/>
            <person name="Hartmann M."/>
            <person name="Huthmacher K."/>
            <person name="Kraemer R."/>
            <person name="Linke B."/>
            <person name="McHardy A.C."/>
            <person name="Meyer F."/>
            <person name="Moeckel B."/>
            <person name="Pfefferle W."/>
            <person name="Puehler A."/>
            <person name="Rey D.A."/>
            <person name="Rueckert C."/>
            <person name="Rupp O."/>
            <person name="Sahm H."/>
            <person name="Wendisch V.F."/>
            <person name="Wiegraebe I."/>
            <person name="Tauch A."/>
        </authorList>
    </citation>
    <scope>NUCLEOTIDE SEQUENCE [LARGE SCALE GENOMIC DNA]</scope>
    <source>
        <strain>ATCC 13032 / DSM 20300 / JCM 1318 / BCRC 11384 / CCUG 27702 / LMG 3730 / NBRC 12168 / NCIMB 10025 / NRRL B-2784 / 534</strain>
    </source>
</reference>